<organismHost>
    <name type="scientific">Homo sapiens</name>
    <name type="common">Human</name>
    <dbReference type="NCBI Taxonomy" id="9606"/>
</organismHost>
<reference key="1">
    <citation type="journal article" date="1999" name="J. Virol.">
        <title>Human herpesvirus 6B genome sequence: coding content and comparison with human herpesvirus 6A.</title>
        <authorList>
            <person name="Dominguez G."/>
            <person name="Dambaugh T.R."/>
            <person name="Stamey F.R."/>
            <person name="Dewhurst S."/>
            <person name="Inoue N."/>
            <person name="Pellett P.E."/>
        </authorList>
    </citation>
    <scope>NUCLEOTIDE SEQUENCE [LARGE SCALE GENOMIC DNA]</scope>
</reference>
<gene>
    <name type="primary">U54</name>
</gene>
<protein>
    <recommendedName>
        <fullName>Protein U54</fullName>
    </recommendedName>
</protein>
<proteinExistence type="inferred from homology"/>
<keyword id="KW-0325">Glycoprotein</keyword>
<keyword id="KW-1185">Reference proteome</keyword>
<keyword id="KW-0732">Signal</keyword>
<organism>
    <name type="scientific">Human herpesvirus 6B (strain Z29)</name>
    <name type="common">HHV-6 variant B</name>
    <name type="synonym">Human B lymphotropic virus</name>
    <dbReference type="NCBI Taxonomy" id="36351"/>
    <lineage>
        <taxon>Viruses</taxon>
        <taxon>Duplodnaviria</taxon>
        <taxon>Heunggongvirae</taxon>
        <taxon>Peploviricota</taxon>
        <taxon>Herviviricetes</taxon>
        <taxon>Herpesvirales</taxon>
        <taxon>Orthoherpesviridae</taxon>
        <taxon>Betaherpesvirinae</taxon>
        <taxon>Roseolovirus</taxon>
        <taxon>Roseolovirus humanbeta6b</taxon>
        <taxon>Human herpesvirus 6B</taxon>
    </lineage>
</organism>
<sequence>MQPATLQWSSYVLQLRLTTAAILKPGELRYFKCGLGICPPSSSVVCTCRDESSFAASPFTYIDPKDYGNIPFAVHNISDLDLDLGRLPIVLNIFALPYANVTVSNLPVQRIEAYDRHAIPHGQCEAQFILYGPLTRIKIYAADIRWTEKTPEEPTRYLFNADIWINLQNTPLDQIFNSAKIEFISHRHVSISRILLCGNLLILKTVYENDYLLDDTFFPEKLNIQLSLTPHTADITMSQNQETLLKCNVGSITVGATKNIVSNLITPFHCSFHTIFESNSNFTGFFIPKLLHGISITTCIWDETRPLYITMKAQKKNCRINYSQELGKVFFFPKQILPPGNNIEFSWTEMSNIYVNIESPNGPVKDIVALASQPVSRAPSLTTVAHVTPEISMGIFLKSLRIAFDKEHLVPLHFFLKPGESTRMEFMPPETPQSLTILEGDVGIRFIPCHNNYSHRSSP</sequence>
<dbReference type="EMBL" id="AF157706">
    <property type="protein sequence ID" value="AAD49657.1"/>
    <property type="molecule type" value="Genomic_DNA"/>
</dbReference>
<dbReference type="RefSeq" id="NP_050235.1">
    <property type="nucleotide sequence ID" value="NC_000898.1"/>
</dbReference>
<dbReference type="SMR" id="Q9QJ29"/>
<dbReference type="GlyCosmos" id="Q9QJ29">
    <property type="glycosylation" value="5 sites, No reported glycans"/>
</dbReference>
<dbReference type="DNASU" id="1497056"/>
<dbReference type="GeneID" id="1497056"/>
<dbReference type="KEGG" id="vg:1497056"/>
<dbReference type="Proteomes" id="UP000006930">
    <property type="component" value="Segment"/>
</dbReference>
<dbReference type="InterPro" id="IPR008649">
    <property type="entry name" value="Herpes_UL82/UL83"/>
</dbReference>
<dbReference type="Pfam" id="PF05784">
    <property type="entry name" value="Herpes_UL82_83"/>
    <property type="match status" value="1"/>
</dbReference>
<accession>Q9QJ29</accession>
<name>VU54_HHV6Z</name>
<comment type="similarity">
    <text evidence="2">Belongs to the herpesviridae UL82 family.</text>
</comment>
<evidence type="ECO:0000255" key="1"/>
<evidence type="ECO:0000305" key="2"/>
<feature type="signal peptide" evidence="1">
    <location>
        <begin position="1"/>
        <end position="20"/>
    </location>
</feature>
<feature type="chain" id="PRO_0000408455" description="Protein U54">
    <location>
        <begin position="21"/>
        <end position="459"/>
    </location>
</feature>
<feature type="glycosylation site" description="N-linked (GlcNAc...) asparagine; by host" evidence="1">
    <location>
        <position position="76"/>
    </location>
</feature>
<feature type="glycosylation site" description="N-linked (GlcNAc...) asparagine; by host" evidence="1">
    <location>
        <position position="100"/>
    </location>
</feature>
<feature type="glycosylation site" description="N-linked (GlcNAc...) asparagine; by host" evidence="1">
    <location>
        <position position="281"/>
    </location>
</feature>
<feature type="glycosylation site" description="N-linked (GlcNAc...) asparagine; by host" evidence="1">
    <location>
        <position position="321"/>
    </location>
</feature>
<feature type="glycosylation site" description="N-linked (GlcNAc...) asparagine; by host" evidence="1">
    <location>
        <position position="452"/>
    </location>
</feature>